<keyword id="KW-0067">ATP-binding</keyword>
<keyword id="KW-0963">Cytoplasm</keyword>
<keyword id="KW-0903">Direct protein sequencing</keyword>
<keyword id="KW-0436">Ligase</keyword>
<keyword id="KW-0460">Magnesium</keyword>
<keyword id="KW-0464">Manganese</keyword>
<keyword id="KW-0479">Metal-binding</keyword>
<keyword id="KW-0511">Multifunctional enzyme</keyword>
<keyword id="KW-0547">Nucleotide-binding</keyword>
<keyword id="KW-0658">Purine biosynthesis</keyword>
<keyword id="KW-1185">Reference proteome</keyword>
<gene>
    <name type="primary">purD</name>
    <name type="ORF">DDB_G0290121</name>
</gene>
<accession>Q54GJ2</accession>
<protein>
    <recommendedName>
        <fullName>Bifunctional purine biosynthetic protein purD</fullName>
    </recommendedName>
    <domain>
        <recommendedName>
            <fullName>Phosphoribosylamine--glycine ligase</fullName>
            <ecNumber evidence="1">6.3.4.13</ecNumber>
        </recommendedName>
        <alternativeName>
            <fullName>Glycinamide ribonucleotide synthetase</fullName>
            <shortName evidence="1">GAR synthetase</shortName>
            <shortName>GARS</shortName>
        </alternativeName>
        <alternativeName>
            <fullName>Phosphoribosylglycinamide synthetase</fullName>
        </alternativeName>
    </domain>
    <domain>
        <recommendedName>
            <fullName>Phosphoribosylformylglycinamidine cyclo-ligase</fullName>
            <ecNumber evidence="1">6.3.3.1</ecNumber>
        </recommendedName>
        <alternativeName>
            <fullName>AIR synthase</fullName>
            <shortName evidence="1">AIR synthetase</shortName>
            <shortName>AIRS</shortName>
        </alternativeName>
        <alternativeName>
            <fullName>Phosphoribosyl-aminoimidazole synthetase</fullName>
        </alternativeName>
    </domain>
</protein>
<evidence type="ECO:0000250" key="1">
    <source>
        <dbReference type="UniProtKB" id="P20772"/>
    </source>
</evidence>
<evidence type="ECO:0000255" key="2"/>
<evidence type="ECO:0000255" key="3">
    <source>
        <dbReference type="PROSITE-ProRule" id="PRU00409"/>
    </source>
</evidence>
<evidence type="ECO:0000305" key="4"/>
<organism>
    <name type="scientific">Dictyostelium discoideum</name>
    <name type="common">Social amoeba</name>
    <dbReference type="NCBI Taxonomy" id="44689"/>
    <lineage>
        <taxon>Eukaryota</taxon>
        <taxon>Amoebozoa</taxon>
        <taxon>Evosea</taxon>
        <taxon>Eumycetozoa</taxon>
        <taxon>Dictyostelia</taxon>
        <taxon>Dictyosteliales</taxon>
        <taxon>Dictyosteliaceae</taxon>
        <taxon>Dictyostelium</taxon>
    </lineage>
</organism>
<dbReference type="EC" id="6.3.4.13" evidence="1"/>
<dbReference type="EC" id="6.3.3.1" evidence="1"/>
<dbReference type="EMBL" id="AAFI02000153">
    <property type="protein sequence ID" value="EAL62377.1"/>
    <property type="molecule type" value="Genomic_DNA"/>
</dbReference>
<dbReference type="RefSeq" id="XP_635881.1">
    <property type="nucleotide sequence ID" value="XM_630789.1"/>
</dbReference>
<dbReference type="SMR" id="Q54GJ2"/>
<dbReference type="FunCoup" id="Q54GJ2">
    <property type="interactions" value="458"/>
</dbReference>
<dbReference type="STRING" id="44689.Q54GJ2"/>
<dbReference type="PaxDb" id="44689-DDB0230084"/>
<dbReference type="EnsemblProtists" id="EAL62377">
    <property type="protein sequence ID" value="EAL62377"/>
    <property type="gene ID" value="DDB_G0290121"/>
</dbReference>
<dbReference type="GeneID" id="8627491"/>
<dbReference type="KEGG" id="ddi:DDB_G0290121"/>
<dbReference type="dictyBase" id="DDB_G0290121">
    <property type="gene designation" value="purD"/>
</dbReference>
<dbReference type="VEuPathDB" id="AmoebaDB:DDB_G0290121"/>
<dbReference type="eggNOG" id="KOG0237">
    <property type="taxonomic scope" value="Eukaryota"/>
</dbReference>
<dbReference type="HOGENOM" id="CLU_005361_1_0_1"/>
<dbReference type="InParanoid" id="Q54GJ2"/>
<dbReference type="OMA" id="EVMQACC"/>
<dbReference type="PhylomeDB" id="Q54GJ2"/>
<dbReference type="Reactome" id="R-DDI-73817">
    <property type="pathway name" value="Purine ribonucleoside monophosphate biosynthesis"/>
</dbReference>
<dbReference type="UniPathway" id="UPA00074">
    <property type="reaction ID" value="UER00125"/>
</dbReference>
<dbReference type="UniPathway" id="UPA00074">
    <property type="reaction ID" value="UER00129"/>
</dbReference>
<dbReference type="PRO" id="PR:Q54GJ2"/>
<dbReference type="Proteomes" id="UP000002195">
    <property type="component" value="Chromosome 5"/>
</dbReference>
<dbReference type="GO" id="GO:0005829">
    <property type="term" value="C:cytosol"/>
    <property type="evidence" value="ECO:0000318"/>
    <property type="project" value="GO_Central"/>
</dbReference>
<dbReference type="GO" id="GO:0005524">
    <property type="term" value="F:ATP binding"/>
    <property type="evidence" value="ECO:0007669"/>
    <property type="project" value="UniProtKB-KW"/>
</dbReference>
<dbReference type="GO" id="GO:0046872">
    <property type="term" value="F:metal ion binding"/>
    <property type="evidence" value="ECO:0007669"/>
    <property type="project" value="UniProtKB-KW"/>
</dbReference>
<dbReference type="GO" id="GO:0004637">
    <property type="term" value="F:phosphoribosylamine-glycine ligase activity"/>
    <property type="evidence" value="ECO:0000318"/>
    <property type="project" value="GO_Central"/>
</dbReference>
<dbReference type="GO" id="GO:0004641">
    <property type="term" value="F:phosphoribosylformylglycinamidine cyclo-ligase activity"/>
    <property type="evidence" value="ECO:0000318"/>
    <property type="project" value="GO_Central"/>
</dbReference>
<dbReference type="GO" id="GO:0006189">
    <property type="term" value="P:'de novo' IMP biosynthetic process"/>
    <property type="evidence" value="ECO:0007669"/>
    <property type="project" value="UniProtKB-UniPathway"/>
</dbReference>
<dbReference type="GO" id="GO:0046084">
    <property type="term" value="P:adenine biosynthetic process"/>
    <property type="evidence" value="ECO:0000318"/>
    <property type="project" value="GO_Central"/>
</dbReference>
<dbReference type="GO" id="GO:0006164">
    <property type="term" value="P:purine nucleotide biosynthetic process"/>
    <property type="evidence" value="ECO:0000318"/>
    <property type="project" value="GO_Central"/>
</dbReference>
<dbReference type="CDD" id="cd02196">
    <property type="entry name" value="PurM"/>
    <property type="match status" value="1"/>
</dbReference>
<dbReference type="FunFam" id="3.40.50.20:FF:000006">
    <property type="entry name" value="Phosphoribosylamine--glycine ligase, chloroplastic"/>
    <property type="match status" value="1"/>
</dbReference>
<dbReference type="FunFam" id="3.30.1490.20:FF:000006">
    <property type="entry name" value="phosphoribosylamine--glycine ligase, chloroplastic-like"/>
    <property type="match status" value="1"/>
</dbReference>
<dbReference type="FunFam" id="3.30.1330.10:FF:000001">
    <property type="entry name" value="Phosphoribosylformylglycinamidine cyclo-ligase"/>
    <property type="match status" value="1"/>
</dbReference>
<dbReference type="FunFam" id="3.30.470.20:FF:000018">
    <property type="entry name" value="Trifunctional purine biosynthetic protein adenosine-3"/>
    <property type="match status" value="1"/>
</dbReference>
<dbReference type="FunFam" id="3.90.600.10:FF:000001">
    <property type="entry name" value="Trifunctional purine biosynthetic protein adenosine-3"/>
    <property type="match status" value="1"/>
</dbReference>
<dbReference type="FunFam" id="3.90.650.10:FF:000019">
    <property type="entry name" value="Trifunctional purine biosynthetic protein adenosine-3"/>
    <property type="match status" value="1"/>
</dbReference>
<dbReference type="Gene3D" id="3.40.50.20">
    <property type="match status" value="1"/>
</dbReference>
<dbReference type="Gene3D" id="3.30.1490.20">
    <property type="entry name" value="ATP-grasp fold, A domain"/>
    <property type="match status" value="1"/>
</dbReference>
<dbReference type="Gene3D" id="3.30.470.20">
    <property type="entry name" value="ATP-grasp fold, B domain"/>
    <property type="match status" value="1"/>
</dbReference>
<dbReference type="Gene3D" id="3.90.600.10">
    <property type="entry name" value="Phosphoribosylglycinamide synthetase, C-terminal domain"/>
    <property type="match status" value="1"/>
</dbReference>
<dbReference type="Gene3D" id="3.90.650.10">
    <property type="entry name" value="PurM-like C-terminal domain"/>
    <property type="match status" value="1"/>
</dbReference>
<dbReference type="Gene3D" id="3.30.1330.10">
    <property type="entry name" value="PurM-like, N-terminal domain"/>
    <property type="match status" value="1"/>
</dbReference>
<dbReference type="HAMAP" id="MF_00741">
    <property type="entry name" value="AIRS"/>
    <property type="match status" value="1"/>
</dbReference>
<dbReference type="HAMAP" id="MF_00138">
    <property type="entry name" value="GARS"/>
    <property type="match status" value="1"/>
</dbReference>
<dbReference type="InterPro" id="IPR011761">
    <property type="entry name" value="ATP-grasp"/>
</dbReference>
<dbReference type="InterPro" id="IPR013815">
    <property type="entry name" value="ATP_grasp_subdomain_1"/>
</dbReference>
<dbReference type="InterPro" id="IPR016185">
    <property type="entry name" value="PreATP-grasp_dom_sf"/>
</dbReference>
<dbReference type="InterPro" id="IPR020561">
    <property type="entry name" value="PRibGlycinamid_synth_ATP-grasp"/>
</dbReference>
<dbReference type="InterPro" id="IPR000115">
    <property type="entry name" value="PRibGlycinamide_synth"/>
</dbReference>
<dbReference type="InterPro" id="IPR020560">
    <property type="entry name" value="PRibGlycinamide_synth_C-dom"/>
</dbReference>
<dbReference type="InterPro" id="IPR037123">
    <property type="entry name" value="PRibGlycinamide_synth_C_sf"/>
</dbReference>
<dbReference type="InterPro" id="IPR020562">
    <property type="entry name" value="PRibGlycinamide_synth_N"/>
</dbReference>
<dbReference type="InterPro" id="IPR010918">
    <property type="entry name" value="PurM-like_C_dom"/>
</dbReference>
<dbReference type="InterPro" id="IPR036676">
    <property type="entry name" value="PurM-like_C_sf"/>
</dbReference>
<dbReference type="InterPro" id="IPR016188">
    <property type="entry name" value="PurM-like_N"/>
</dbReference>
<dbReference type="InterPro" id="IPR036921">
    <property type="entry name" value="PurM-like_N_sf"/>
</dbReference>
<dbReference type="InterPro" id="IPR004733">
    <property type="entry name" value="PurM_cligase"/>
</dbReference>
<dbReference type="InterPro" id="IPR011054">
    <property type="entry name" value="Rudment_hybrid_motif"/>
</dbReference>
<dbReference type="NCBIfam" id="TIGR00877">
    <property type="entry name" value="purD"/>
    <property type="match status" value="1"/>
</dbReference>
<dbReference type="NCBIfam" id="TIGR00878">
    <property type="entry name" value="purM"/>
    <property type="match status" value="1"/>
</dbReference>
<dbReference type="PANTHER" id="PTHR10520:SF12">
    <property type="entry name" value="TRIFUNCTIONAL PURINE BIOSYNTHETIC PROTEIN ADENOSINE-3"/>
    <property type="match status" value="1"/>
</dbReference>
<dbReference type="PANTHER" id="PTHR10520">
    <property type="entry name" value="TRIFUNCTIONAL PURINE BIOSYNTHETIC PROTEIN ADENOSINE-3-RELATED"/>
    <property type="match status" value="1"/>
</dbReference>
<dbReference type="Pfam" id="PF00586">
    <property type="entry name" value="AIRS"/>
    <property type="match status" value="1"/>
</dbReference>
<dbReference type="Pfam" id="PF02769">
    <property type="entry name" value="AIRS_C"/>
    <property type="match status" value="1"/>
</dbReference>
<dbReference type="Pfam" id="PF01071">
    <property type="entry name" value="GARS_A"/>
    <property type="match status" value="1"/>
</dbReference>
<dbReference type="Pfam" id="PF02843">
    <property type="entry name" value="GARS_C"/>
    <property type="match status" value="1"/>
</dbReference>
<dbReference type="Pfam" id="PF02844">
    <property type="entry name" value="GARS_N"/>
    <property type="match status" value="1"/>
</dbReference>
<dbReference type="SMART" id="SM01209">
    <property type="entry name" value="GARS_A"/>
    <property type="match status" value="1"/>
</dbReference>
<dbReference type="SMART" id="SM01210">
    <property type="entry name" value="GARS_C"/>
    <property type="match status" value="1"/>
</dbReference>
<dbReference type="SUPFAM" id="SSF56059">
    <property type="entry name" value="Glutathione synthetase ATP-binding domain-like"/>
    <property type="match status" value="1"/>
</dbReference>
<dbReference type="SUPFAM" id="SSF52440">
    <property type="entry name" value="PreATP-grasp domain"/>
    <property type="match status" value="1"/>
</dbReference>
<dbReference type="SUPFAM" id="SSF56042">
    <property type="entry name" value="PurM C-terminal domain-like"/>
    <property type="match status" value="1"/>
</dbReference>
<dbReference type="SUPFAM" id="SSF55326">
    <property type="entry name" value="PurM N-terminal domain-like"/>
    <property type="match status" value="1"/>
</dbReference>
<dbReference type="SUPFAM" id="SSF51246">
    <property type="entry name" value="Rudiment single hybrid motif"/>
    <property type="match status" value="1"/>
</dbReference>
<dbReference type="PROSITE" id="PS50975">
    <property type="entry name" value="ATP_GRASP"/>
    <property type="match status" value="1"/>
</dbReference>
<sequence>MTIKNNILVIGSGSREHAITWKLLESNQVDKVILVPGNASSSTMERVITVECSKIDAESISNICKEHNVEYVFVGPEVPLVDGIVDGLKRKGISCFGPTKKAAQLEGSKVFCKDFMARNNIPSARYQTFTDYNKAKQYIESLNYKIVLKASGCAAGKGVLIPNNKEEELEGLKRIMVDKEFGSAGDEIVIEEFLDGEECSLMCFSDGYSLVVMPPAQDHKRIFDGDKGANTGGMGAYAPAPFIVDCNNNATTDKSKSKSSFGTIIDRCVETILKPTINGMRKEGKPFVGVLFAGLMVSSSSSTTNDKVINVLEFNCRMGDPETQVVLPLLETDLFEIVLACIEGRLDGLDVKWSNKFAVTVVAASKGYPDSYPKGLKINGLLENKNTNDNIIFQAGTTVNGSNDIVTNGGRVLSCTSVSESLEDAIKNSYKLIETISFEGMQYRKDIGQKALNHLERKKQQQANSKQSVSYSESGVDIERGDAVVDNIGPLAKATTRLGCVSDLGGFGALFDTKAAGFRDPILVSGTDGVGTKLKIAQELGIHDSIGIDLVAMCVNDVVVQGAEPLFFLDYFATGRIHVDVATQVVSGIARGCKESGCALIGGETAEMPGMYKDGEYDLAGFSVGAVERDQMLPSNIQEGNILLGLASSGVHSNGYSLVRYLIETKSGGLTYNSIAPFDSSKTLGQVLLTPTKLYVLSCLAAIKSGGVNGLAHITGGGITENLPRVIPDGLDCEVELGSWEILPIFKYLVELGNMETEELLKTFNSGIGMILIVSPDKVDSITKSLESNNEKVYKIGKIINSKTSKQSKSKVIYK</sequence>
<feature type="chain" id="PRO_0000328326" description="Bifunctional purine biosynthetic protein purD">
    <location>
        <begin position="1"/>
        <end position="815"/>
    </location>
</feature>
<feature type="domain" description="ATP-grasp" evidence="3">
    <location>
        <begin position="113"/>
        <end position="343"/>
    </location>
</feature>
<feature type="region of interest" description="GARS" evidence="2">
    <location>
        <begin position="6"/>
        <end position="452"/>
    </location>
</feature>
<feature type="region of interest" description="AIRS" evidence="2">
    <location>
        <begin position="469"/>
        <end position="801"/>
    </location>
</feature>
<feature type="binding site" evidence="3">
    <location>
        <begin position="139"/>
        <end position="200"/>
    </location>
    <ligand>
        <name>ATP</name>
        <dbReference type="ChEBI" id="CHEBI:30616"/>
    </ligand>
</feature>
<feature type="binding site" evidence="3">
    <location>
        <position position="313"/>
    </location>
    <ligand>
        <name>Mg(2+)</name>
        <dbReference type="ChEBI" id="CHEBI:18420"/>
    </ligand>
</feature>
<feature type="binding site" evidence="3">
    <location>
        <position position="315"/>
    </location>
    <ligand>
        <name>Mg(2+)</name>
        <dbReference type="ChEBI" id="CHEBI:18420"/>
    </ligand>
</feature>
<proteinExistence type="evidence at protein level"/>
<name>PUR2_DICDI</name>
<reference key="1">
    <citation type="journal article" date="2005" name="Nature">
        <title>The genome of the social amoeba Dictyostelium discoideum.</title>
        <authorList>
            <person name="Eichinger L."/>
            <person name="Pachebat J.A."/>
            <person name="Gloeckner G."/>
            <person name="Rajandream M.A."/>
            <person name="Sucgang R."/>
            <person name="Berriman M."/>
            <person name="Song J."/>
            <person name="Olsen R."/>
            <person name="Szafranski K."/>
            <person name="Xu Q."/>
            <person name="Tunggal B."/>
            <person name="Kummerfeld S."/>
            <person name="Madera M."/>
            <person name="Konfortov B.A."/>
            <person name="Rivero F."/>
            <person name="Bankier A.T."/>
            <person name="Lehmann R."/>
            <person name="Hamlin N."/>
            <person name="Davies R."/>
            <person name="Gaudet P."/>
            <person name="Fey P."/>
            <person name="Pilcher K."/>
            <person name="Chen G."/>
            <person name="Saunders D."/>
            <person name="Sodergren E.J."/>
            <person name="Davis P."/>
            <person name="Kerhornou A."/>
            <person name="Nie X."/>
            <person name="Hall N."/>
            <person name="Anjard C."/>
            <person name="Hemphill L."/>
            <person name="Bason N."/>
            <person name="Farbrother P."/>
            <person name="Desany B."/>
            <person name="Just E."/>
            <person name="Morio T."/>
            <person name="Rost R."/>
            <person name="Churcher C.M."/>
            <person name="Cooper J."/>
            <person name="Haydock S."/>
            <person name="van Driessche N."/>
            <person name="Cronin A."/>
            <person name="Goodhead I."/>
            <person name="Muzny D.M."/>
            <person name="Mourier T."/>
            <person name="Pain A."/>
            <person name="Lu M."/>
            <person name="Harper D."/>
            <person name="Lindsay R."/>
            <person name="Hauser H."/>
            <person name="James K.D."/>
            <person name="Quiles M."/>
            <person name="Madan Babu M."/>
            <person name="Saito T."/>
            <person name="Buchrieser C."/>
            <person name="Wardroper A."/>
            <person name="Felder M."/>
            <person name="Thangavelu M."/>
            <person name="Johnson D."/>
            <person name="Knights A."/>
            <person name="Loulseged H."/>
            <person name="Mungall K.L."/>
            <person name="Oliver K."/>
            <person name="Price C."/>
            <person name="Quail M.A."/>
            <person name="Urushihara H."/>
            <person name="Hernandez J."/>
            <person name="Rabbinowitsch E."/>
            <person name="Steffen D."/>
            <person name="Sanders M."/>
            <person name="Ma J."/>
            <person name="Kohara Y."/>
            <person name="Sharp S."/>
            <person name="Simmonds M.N."/>
            <person name="Spiegler S."/>
            <person name="Tivey A."/>
            <person name="Sugano S."/>
            <person name="White B."/>
            <person name="Walker D."/>
            <person name="Woodward J.R."/>
            <person name="Winckler T."/>
            <person name="Tanaka Y."/>
            <person name="Shaulsky G."/>
            <person name="Schleicher M."/>
            <person name="Weinstock G.M."/>
            <person name="Rosenthal A."/>
            <person name="Cox E.C."/>
            <person name="Chisholm R.L."/>
            <person name="Gibbs R.A."/>
            <person name="Loomis W.F."/>
            <person name="Platzer M."/>
            <person name="Kay R.R."/>
            <person name="Williams J.G."/>
            <person name="Dear P.H."/>
            <person name="Noegel A.A."/>
            <person name="Barrell B.G."/>
            <person name="Kuspa A."/>
        </authorList>
    </citation>
    <scope>NUCLEOTIDE SEQUENCE [LARGE SCALE GENOMIC DNA]</scope>
    <source>
        <strain>AX4</strain>
    </source>
</reference>
<reference key="2">
    <citation type="submission" date="2009-07" db="UniProtKB">
        <authorList>
            <person name="Bienvenut W.V."/>
            <person name="Ura S."/>
            <person name="Insall R.H."/>
        </authorList>
    </citation>
    <scope>PROTEIN SEQUENCE OF 515-533 AND 667-682</scope>
    <scope>IDENTIFICATION BY MASS SPECTROMETRY</scope>
    <source>
        <strain>AX2</strain>
    </source>
</reference>
<comment type="function">
    <text evidence="1">Catalyzes the second and fifth step in the 'de novo' purine biosynthesis pathway; contains phosphoribosylamine--glycine ligase (GARS) and phosphoribosylformylglycinamidine cyclo-ligase (AIRS) activities.</text>
</comment>
<comment type="catalytic activity">
    <reaction evidence="1">
        <text>5-phospho-beta-D-ribosylamine + glycine + ATP = N(1)-(5-phospho-beta-D-ribosyl)glycinamide + ADP + phosphate + H(+)</text>
        <dbReference type="Rhea" id="RHEA:17453"/>
        <dbReference type="ChEBI" id="CHEBI:15378"/>
        <dbReference type="ChEBI" id="CHEBI:30616"/>
        <dbReference type="ChEBI" id="CHEBI:43474"/>
        <dbReference type="ChEBI" id="CHEBI:57305"/>
        <dbReference type="ChEBI" id="CHEBI:58681"/>
        <dbReference type="ChEBI" id="CHEBI:143788"/>
        <dbReference type="ChEBI" id="CHEBI:456216"/>
        <dbReference type="EC" id="6.3.4.13"/>
    </reaction>
</comment>
<comment type="catalytic activity">
    <reaction evidence="1">
        <text>2-formamido-N(1)-(5-O-phospho-beta-D-ribosyl)acetamidine + ATP = 5-amino-1-(5-phospho-beta-D-ribosyl)imidazole + ADP + phosphate + H(+)</text>
        <dbReference type="Rhea" id="RHEA:23032"/>
        <dbReference type="ChEBI" id="CHEBI:15378"/>
        <dbReference type="ChEBI" id="CHEBI:30616"/>
        <dbReference type="ChEBI" id="CHEBI:43474"/>
        <dbReference type="ChEBI" id="CHEBI:137981"/>
        <dbReference type="ChEBI" id="CHEBI:147287"/>
        <dbReference type="ChEBI" id="CHEBI:456216"/>
        <dbReference type="EC" id="6.3.3.1"/>
    </reaction>
</comment>
<comment type="cofactor">
    <cofactor evidence="3">
        <name>Mg(2+)</name>
        <dbReference type="ChEBI" id="CHEBI:18420"/>
    </cofactor>
    <cofactor evidence="3">
        <name>Mn(2+)</name>
        <dbReference type="ChEBI" id="CHEBI:29035"/>
    </cofactor>
    <text evidence="4">Binds no magnesium or manganese ion per subunit.</text>
</comment>
<comment type="pathway">
    <text evidence="4">Purine metabolism; IMP biosynthesis via de novo pathway; 5-amino-1-(5-phospho-D-ribosyl)imidazole from N(2)-formyl-N(1)-(5-phospho-D-ribosyl)glycinamide: step 2/2.</text>
</comment>
<comment type="pathway">
    <text evidence="4">Purine metabolism; IMP biosynthesis via de novo pathway; N(1)-(5-phospho-D-ribosyl)glycinamide from 5-phospho-alpha-D-ribose 1-diphosphate: step 2/2.</text>
</comment>
<comment type="subcellular location">
    <subcellularLocation>
        <location evidence="1">Cytoplasm</location>
        <location evidence="1">Cytosol</location>
    </subcellularLocation>
</comment>
<comment type="similarity">
    <text evidence="4">In the N-terminal section; belongs to the GARS family.</text>
</comment>
<comment type="similarity">
    <text evidence="4">In the C-terminal section; belongs to the AIR synthase family.</text>
</comment>